<sequence>MALPIEGKLSMANNRIERLKSPSSSSTCSMDEVLITSSNNSSSICLETMRQLPREGVSGQINIIKETAASSSSHAALFIKQDLYEHIDPLPAYPPSYDLVNPNKEVRFPIFGDTAPCPKSSLPPLYAPAVYELTLISLKLERLSPYEISSNRSWRNFIIEINSTQLNFYHIDESLTKHIRNYSSGETKSEKEDRIHSDLVHRSDQSQHLHHRLFTLPTRSASEFKKADQERISYRVKRDRSRYLTDEALYKSFTLQNARFGIPTDYTKKSFVLRMSCESEQFLLRFSHIDDMIDWSMYLSIGISVSLDLEVREYPDYRIVPRRRRRRRRRRRRRRHTHRSESSMGSFSQRFIRSNSRPDLIQRYSTGSSTNNNTTIRERSNTFTAGLLDHYCTGLSKTPTEALISSAASGESSDNSTLGSTRSLSGCSASRSIASRSLKFKIKNFFRPKNSSRTEKLHRLRSNSSNLNSVIETEEDDEHHESSGGDHPEPGVPVNTTIKVERPMHRNRAISMPQRQSLRRAISEEVVPIKFPNSTVGESVHSPSPIEHLSVDGCEIMLQSQNAVMKEELRSVASNLVANERDEASIRPKPQSSSIYLSGLAPNGESATDLSQSSRSLCLTNRDAEINDDESATETDEDENDGETDEYAGDDTNDDTDDSNIGYAYGSESDYSCLIEERIRNRRRASSTLSCFSNIPYGTDDIKWKPAIKEISRRRYLRDSLKCIKPFLDSNDCLGKVIYIPVSGPTFETSNKIHFSNRQSLQKQKNHFLKGFIVGPTALIELNCKNKNAIVGTTKDAEDHGEDDGDGDDGEDDDDDDDDDDDDDDDEDDDDDDDDDDDDDDDDDDGQITA</sequence>
<gene>
    <name type="ordered locus">YHR131C</name>
</gene>
<feature type="chain" id="PRO_0000202917" description="PH domain-containing protein YHR131C">
    <location>
        <begin position="1"/>
        <end position="850"/>
    </location>
</feature>
<feature type="domain" description="PH">
    <location>
        <begin position="194"/>
        <end position="306"/>
    </location>
</feature>
<feature type="region of interest" description="Disordered" evidence="1">
    <location>
        <begin position="324"/>
        <end position="348"/>
    </location>
</feature>
<feature type="region of interest" description="Disordered" evidence="1">
    <location>
        <begin position="406"/>
        <end position="428"/>
    </location>
</feature>
<feature type="region of interest" description="Disordered" evidence="1">
    <location>
        <begin position="451"/>
        <end position="494"/>
    </location>
</feature>
<feature type="region of interest" description="Disordered" evidence="1">
    <location>
        <begin position="583"/>
        <end position="659"/>
    </location>
</feature>
<feature type="region of interest" description="Disordered" evidence="1">
    <location>
        <begin position="793"/>
        <end position="850"/>
    </location>
</feature>
<feature type="compositionally biased region" description="Basic residues" evidence="1">
    <location>
        <begin position="324"/>
        <end position="338"/>
    </location>
</feature>
<feature type="compositionally biased region" description="Low complexity" evidence="1">
    <location>
        <begin position="406"/>
        <end position="416"/>
    </location>
</feature>
<feature type="compositionally biased region" description="Polar residues" evidence="1">
    <location>
        <begin position="417"/>
        <end position="428"/>
    </location>
</feature>
<feature type="compositionally biased region" description="Basic and acidic residues" evidence="1">
    <location>
        <begin position="479"/>
        <end position="489"/>
    </location>
</feature>
<feature type="compositionally biased region" description="Polar residues" evidence="1">
    <location>
        <begin position="605"/>
        <end position="619"/>
    </location>
</feature>
<feature type="compositionally biased region" description="Acidic residues" evidence="1">
    <location>
        <begin position="626"/>
        <end position="658"/>
    </location>
</feature>
<feature type="compositionally biased region" description="Acidic residues" evidence="1">
    <location>
        <begin position="799"/>
        <end position="850"/>
    </location>
</feature>
<accession>P38835</accession>
<accession>D3DL79</accession>
<proteinExistence type="evidence at protein level"/>
<evidence type="ECO:0000256" key="1">
    <source>
        <dbReference type="SAM" id="MobiDB-lite"/>
    </source>
</evidence>
<evidence type="ECO:0000269" key="2">
    <source>
    </source>
</evidence>
<evidence type="ECO:0000269" key="3">
    <source>
    </source>
</evidence>
<protein>
    <recommendedName>
        <fullName>PH domain-containing protein YHR131C</fullName>
    </recommendedName>
</protein>
<name>YHT1_YEAST</name>
<reference key="1">
    <citation type="journal article" date="1994" name="Science">
        <title>Complete nucleotide sequence of Saccharomyces cerevisiae chromosome VIII.</title>
        <authorList>
            <person name="Johnston M."/>
            <person name="Andrews S."/>
            <person name="Brinkman R."/>
            <person name="Cooper J."/>
            <person name="Ding H."/>
            <person name="Dover J."/>
            <person name="Du Z."/>
            <person name="Favello A."/>
            <person name="Fulton L."/>
            <person name="Gattung S."/>
            <person name="Geisel C."/>
            <person name="Kirsten J."/>
            <person name="Kucaba T."/>
            <person name="Hillier L.W."/>
            <person name="Jier M."/>
            <person name="Johnston L."/>
            <person name="Langston Y."/>
            <person name="Latreille P."/>
            <person name="Louis E.J."/>
            <person name="Macri C."/>
            <person name="Mardis E."/>
            <person name="Menezes S."/>
            <person name="Mouser L."/>
            <person name="Nhan M."/>
            <person name="Rifkin L."/>
            <person name="Riles L."/>
            <person name="St Peter H."/>
            <person name="Trevaskis E."/>
            <person name="Vaughan K."/>
            <person name="Vignati D."/>
            <person name="Wilcox L."/>
            <person name="Wohldman P."/>
            <person name="Waterston R."/>
            <person name="Wilson R."/>
            <person name="Vaudin M."/>
        </authorList>
    </citation>
    <scope>NUCLEOTIDE SEQUENCE [LARGE SCALE GENOMIC DNA]</scope>
    <source>
        <strain>ATCC 204508 / S288c</strain>
    </source>
</reference>
<reference key="2">
    <citation type="submission" date="2005-11" db="EMBL/GenBank/DDBJ databases">
        <authorList>
            <person name="Hong E.L."/>
            <person name="Cherry J.M."/>
        </authorList>
    </citation>
    <scope>SEQUENCE REVISION TO N-TERMINUS</scope>
</reference>
<reference key="3">
    <citation type="journal article" date="2014" name="G3 (Bethesda)">
        <title>The reference genome sequence of Saccharomyces cerevisiae: Then and now.</title>
        <authorList>
            <person name="Engel S.R."/>
            <person name="Dietrich F.S."/>
            <person name="Fisk D.G."/>
            <person name="Binkley G."/>
            <person name="Balakrishnan R."/>
            <person name="Costanzo M.C."/>
            <person name="Dwight S.S."/>
            <person name="Hitz B.C."/>
            <person name="Karra K."/>
            <person name="Nash R.S."/>
            <person name="Weng S."/>
            <person name="Wong E.D."/>
            <person name="Lloyd P."/>
            <person name="Skrzypek M.S."/>
            <person name="Miyasato S.R."/>
            <person name="Simison M."/>
            <person name="Cherry J.M."/>
        </authorList>
    </citation>
    <scope>GENOME REANNOTATION</scope>
    <source>
        <strain>ATCC 204508 / S288c</strain>
    </source>
</reference>
<reference key="4">
    <citation type="journal article" date="2003" name="Nature">
        <title>Sequencing and comparison of yeast species to identify genes and regulatory elements.</title>
        <authorList>
            <person name="Kellis M."/>
            <person name="Patterson N."/>
            <person name="Endrizzi M."/>
            <person name="Birren B.W."/>
            <person name="Lander E.S."/>
        </authorList>
    </citation>
    <scope>IDENTIFICATION OF FRAMESHIFT</scope>
</reference>
<reference key="5">
    <citation type="journal article" date="2003" name="Nature">
        <title>Global analysis of protein localization in budding yeast.</title>
        <authorList>
            <person name="Huh W.-K."/>
            <person name="Falvo J.V."/>
            <person name="Gerke L.C."/>
            <person name="Carroll A.S."/>
            <person name="Howson R.W."/>
            <person name="Weissman J.S."/>
            <person name="O'Shea E.K."/>
        </authorList>
    </citation>
    <scope>SUBCELLULAR LOCATION [LARGE SCALE ANALYSIS]</scope>
</reference>
<reference key="6">
    <citation type="journal article" date="2003" name="Nature">
        <title>Global analysis of protein expression in yeast.</title>
        <authorList>
            <person name="Ghaemmaghami S."/>
            <person name="Huh W.-K."/>
            <person name="Bower K."/>
            <person name="Howson R.W."/>
            <person name="Belle A."/>
            <person name="Dephoure N."/>
            <person name="O'Shea E.K."/>
            <person name="Weissman J.S."/>
        </authorList>
    </citation>
    <scope>LEVEL OF PROTEIN EXPRESSION [LARGE SCALE ANALYSIS]</scope>
</reference>
<reference key="7">
    <citation type="journal article" date="2008" name="Mol. Cell. Proteomics">
        <title>A multidimensional chromatography technology for in-depth phosphoproteome analysis.</title>
        <authorList>
            <person name="Albuquerque C.P."/>
            <person name="Smolka M.B."/>
            <person name="Payne S.H."/>
            <person name="Bafna V."/>
            <person name="Eng J."/>
            <person name="Zhou H."/>
        </authorList>
    </citation>
    <scope>IDENTIFICATION BY MASS SPECTROMETRY [LARGE SCALE ANALYSIS]</scope>
</reference>
<dbReference type="EMBL" id="U10398">
    <property type="protein sequence ID" value="AAB68414.2"/>
    <property type="molecule type" value="Genomic_DNA"/>
</dbReference>
<dbReference type="EMBL" id="BK006934">
    <property type="protein sequence ID" value="DAA06823.1"/>
    <property type="molecule type" value="Genomic_DNA"/>
</dbReference>
<dbReference type="PIR" id="S48975">
    <property type="entry name" value="S48975"/>
</dbReference>
<dbReference type="RefSeq" id="NP_011999.2">
    <property type="nucleotide sequence ID" value="NM_001179261.1"/>
</dbReference>
<dbReference type="BioGRID" id="36563">
    <property type="interactions" value="44"/>
</dbReference>
<dbReference type="FunCoup" id="P38835">
    <property type="interactions" value="45"/>
</dbReference>
<dbReference type="IntAct" id="P38835">
    <property type="interactions" value="22"/>
</dbReference>
<dbReference type="MINT" id="P38835"/>
<dbReference type="STRING" id="4932.YHR131C"/>
<dbReference type="iPTMnet" id="P38835"/>
<dbReference type="PaxDb" id="4932-YHR131C"/>
<dbReference type="PeptideAtlas" id="P38835"/>
<dbReference type="EnsemblFungi" id="YHR131C_mRNA">
    <property type="protein sequence ID" value="YHR131C"/>
    <property type="gene ID" value="YHR131C"/>
</dbReference>
<dbReference type="GeneID" id="856532"/>
<dbReference type="KEGG" id="sce:YHR131C"/>
<dbReference type="AGR" id="SGD:S000001173"/>
<dbReference type="SGD" id="S000001173">
    <property type="gene designation" value="YHR131C"/>
</dbReference>
<dbReference type="VEuPathDB" id="FungiDB:YHR131C"/>
<dbReference type="eggNOG" id="ENOG502QUAB">
    <property type="taxonomic scope" value="Eukaryota"/>
</dbReference>
<dbReference type="GeneTree" id="ENSGT00940000176577"/>
<dbReference type="HOGENOM" id="CLU_012105_0_0_1"/>
<dbReference type="InParanoid" id="P38835"/>
<dbReference type="OMA" id="FYHIDES"/>
<dbReference type="OrthoDB" id="5865767at2759"/>
<dbReference type="BioCyc" id="YEAST:G3O-31169-MONOMER"/>
<dbReference type="BioGRID-ORCS" id="856532">
    <property type="hits" value="0 hits in 10 CRISPR screens"/>
</dbReference>
<dbReference type="PRO" id="PR:P38835"/>
<dbReference type="Proteomes" id="UP000002311">
    <property type="component" value="Chromosome VIII"/>
</dbReference>
<dbReference type="RNAct" id="P38835">
    <property type="molecule type" value="protein"/>
</dbReference>
<dbReference type="GO" id="GO:0005737">
    <property type="term" value="C:cytoplasm"/>
    <property type="evidence" value="ECO:0007005"/>
    <property type="project" value="SGD"/>
</dbReference>
<dbReference type="GO" id="GO:0005829">
    <property type="term" value="C:cytosol"/>
    <property type="evidence" value="ECO:0007005"/>
    <property type="project" value="SGD"/>
</dbReference>
<dbReference type="Gene3D" id="2.30.29.30">
    <property type="entry name" value="Pleckstrin-homology domain (PH domain)/Phosphotyrosine-binding domain (PTB)"/>
    <property type="match status" value="1"/>
</dbReference>
<dbReference type="InterPro" id="IPR011993">
    <property type="entry name" value="PH-like_dom_sf"/>
</dbReference>
<dbReference type="PANTHER" id="PTHR37283">
    <property type="entry name" value="PH DOMAIN-CONTAINING PROTEIN YHR131C"/>
    <property type="match status" value="1"/>
</dbReference>
<dbReference type="PANTHER" id="PTHR37283:SF1">
    <property type="entry name" value="PH DOMAIN-CONTAINING PROTEIN YHR131C"/>
    <property type="match status" value="1"/>
</dbReference>
<comment type="interaction">
    <interactant intactId="EBI-24724">
        <id>P38835</id>
    </interactant>
    <interactant intactId="EBI-16219">
        <id>P39940</id>
        <label>RSP5</label>
    </interactant>
    <organismsDiffer>false</organismsDiffer>
    <experiments>3</experiments>
</comment>
<comment type="subcellular location">
    <subcellularLocation>
        <location evidence="2">Cytoplasm</location>
    </subcellularLocation>
</comment>
<comment type="miscellaneous">
    <text evidence="3">Present with 172 molecules/cell in log phase SD medium.</text>
</comment>
<keyword id="KW-0963">Cytoplasm</keyword>
<keyword id="KW-1185">Reference proteome</keyword>
<organism>
    <name type="scientific">Saccharomyces cerevisiae (strain ATCC 204508 / S288c)</name>
    <name type="common">Baker's yeast</name>
    <dbReference type="NCBI Taxonomy" id="559292"/>
    <lineage>
        <taxon>Eukaryota</taxon>
        <taxon>Fungi</taxon>
        <taxon>Dikarya</taxon>
        <taxon>Ascomycota</taxon>
        <taxon>Saccharomycotina</taxon>
        <taxon>Saccharomycetes</taxon>
        <taxon>Saccharomycetales</taxon>
        <taxon>Saccharomycetaceae</taxon>
        <taxon>Saccharomyces</taxon>
    </lineage>
</organism>